<protein>
    <recommendedName>
        <fullName evidence="11">Tenellin synthetase</fullName>
        <shortName evidence="10">TENS</shortName>
        <ecNumber evidence="6 7">2.3.1.-</ecNumber>
        <ecNumber evidence="6 7">6.3.2.-</ecNumber>
    </recommendedName>
    <alternativeName>
        <fullName evidence="10">Hybrid PKS-NRPS synthetase tenS</fullName>
    </alternativeName>
    <alternativeName>
        <fullName evidence="10">Tenellin-type 2-pyridones biosynthesis cluster protein S</fullName>
    </alternativeName>
</protein>
<accession>A0JJU1</accession>
<evidence type="ECO:0000255" key="1"/>
<evidence type="ECO:0000255" key="2">
    <source>
        <dbReference type="PROSITE-ProRule" id="PRU00258"/>
    </source>
</evidence>
<evidence type="ECO:0000255" key="3">
    <source>
        <dbReference type="PROSITE-ProRule" id="PRU01348"/>
    </source>
</evidence>
<evidence type="ECO:0000255" key="4">
    <source>
        <dbReference type="PROSITE-ProRule" id="PRU01363"/>
    </source>
</evidence>
<evidence type="ECO:0000256" key="5">
    <source>
        <dbReference type="SAM" id="MobiDB-lite"/>
    </source>
</evidence>
<evidence type="ECO:0000269" key="6">
    <source>
    </source>
</evidence>
<evidence type="ECO:0000269" key="7">
    <source>
    </source>
</evidence>
<evidence type="ECO:0000269" key="8">
    <source>
    </source>
</evidence>
<evidence type="ECO:0000269" key="9">
    <source>
    </source>
</evidence>
<evidence type="ECO:0000303" key="10">
    <source>
    </source>
</evidence>
<evidence type="ECO:0000303" key="11">
    <source>
    </source>
</evidence>
<evidence type="ECO:0000305" key="12"/>
<evidence type="ECO:0000305" key="13">
    <source>
    </source>
</evidence>
<reference key="1">
    <citation type="journal article" date="2007" name="ChemBioChem">
        <title>Biosynthesis of the 2-pyridone tenellin in the insect pathogenic fungus Beauveria bassiana.</title>
        <authorList>
            <person name="Eley K.L."/>
            <person name="Halo L.M."/>
            <person name="Song Z."/>
            <person name="Powles H."/>
            <person name="Cox R.J."/>
            <person name="Bailey A.M."/>
            <person name="Lazarus C.M."/>
            <person name="Simpson T.J."/>
        </authorList>
    </citation>
    <scope>NUCLEOTIDE SEQUENCE [GENOMIC DNA]</scope>
    <scope>FUNCTION</scope>
    <scope>PATHWAY</scope>
    <scope>CATALYTIC ACTIVITY</scope>
    <scope>DOMAIN</scope>
    <scope>DISRUPTION PHENOTYPE</scope>
    <source>
        <strain>CBS 110.25</strain>
    </source>
</reference>
<reference key="2">
    <citation type="journal article" date="2008" name="ChemBioChem">
        <title>Authentic heterologous expression of the tenellin iterative polyketide synthase nonribosomal peptide synthetase requires coexpression with an enoyl reductase.</title>
        <authorList>
            <person name="Halo L.M."/>
            <person name="Marshall J.W."/>
            <person name="Yakasai A.A."/>
            <person name="Song Z."/>
            <person name="Butts C.P."/>
            <person name="Crump M.P."/>
            <person name="Heneghan M."/>
            <person name="Bailey A.M."/>
            <person name="Simpson T.J."/>
            <person name="Lazarus C.M."/>
            <person name="Cox R.J."/>
        </authorList>
    </citation>
    <scope>FUNCTION</scope>
    <scope>CATALYTIC ACTIVITY</scope>
</reference>
<reference key="3">
    <citation type="journal article" date="2010" name="ChemBioChem">
        <title>First heterologous reconstruction of a complete functional fungal biosynthetic multigene cluster.</title>
        <authorList>
            <person name="Heneghan M.N."/>
            <person name="Yakasai A.A."/>
            <person name="Halo L.M."/>
            <person name="Song Z."/>
            <person name="Bailey A.M."/>
            <person name="Simpson T.J."/>
            <person name="Cox R.J."/>
            <person name="Lazarus C.M."/>
        </authorList>
    </citation>
    <scope>FUNCTION</scope>
    <scope>PATHWAY</scope>
</reference>
<reference key="4">
    <citation type="journal article" date="2021" name="MBio">
        <title>Inductive production of the iron-chelating 2-pyridones benefits the producing fungus to compete for diverse niches.</title>
        <authorList>
            <person name="Chen B."/>
            <person name="Sun Y."/>
            <person name="Li S."/>
            <person name="Yin Y."/>
            <person name="Wang C."/>
        </authorList>
    </citation>
    <scope>FUNCTION</scope>
    <scope>DISRUPTION PHENOTYPE</scope>
    <scope>PATHWAY</scope>
    <scope>INDUCTION</scope>
</reference>
<name>TENS_BEABA</name>
<organism>
    <name type="scientific">Beauveria bassiana</name>
    <name type="common">White muscardine disease fungus</name>
    <name type="synonym">Tritirachium shiotae</name>
    <dbReference type="NCBI Taxonomy" id="176275"/>
    <lineage>
        <taxon>Eukaryota</taxon>
        <taxon>Fungi</taxon>
        <taxon>Dikarya</taxon>
        <taxon>Ascomycota</taxon>
        <taxon>Pezizomycotina</taxon>
        <taxon>Sordariomycetes</taxon>
        <taxon>Hypocreomycetidae</taxon>
        <taxon>Hypocreales</taxon>
        <taxon>Cordycipitaceae</taxon>
        <taxon>Beauveria</taxon>
    </lineage>
</organism>
<proteinExistence type="evidence at protein level"/>
<comment type="function">
    <text evidence="6 7 8 9">Hybrid PKS-NRPS synthetase; part of the gene cluster that mediates the biosynthesis of tenellin-type 2-pyridones, iron-chelating compounds involved in iron stress tolerance, competition with the natural competitor fungus Metarhizium robertsii and insect hosts infection (PubMed:17216664, PubMed:18266306, PubMed:20575135, PubMed:34903054). TenS catalyzes the assembly of the polyketide-amino acid backbone (PubMed:18266306, PubMed:34903054). Because tenS lacks a designated enoylreductase (ER) domain, the required activity is provided the enoyl reductase tenC (PubMed:18266306, PubMed:34903054). Upon formation of the polyketide backbone on the thiotemplate, the triketide is transferred to the NRPS module and linked to tyrosine to produce the pyrrolidine-2-dione intermediates, including pretellinin A, 11-hydropretellenin A, 12-hydropretellenin A, 13-hydropretellenin A, 14-hydropretellenin A, 12-oxopretellenin A and prototellinin D (PubMed:18266306, PubMed:34903054). The pathway begins with the assembly of the polyketide-amino acid backbone by the hybrid PKS-NRPS tenS with the help of the enoyl reductase tenC. These enzymes catalyze the synthesis of the pyrrolidine-2-dione intermediates pretellinin A, 11-hydropretellenin A, 12-hydropretellenin A, 13-hydropretellenin A, 14-hydropretellenin A, 12-oxopretellenin A and prototellinin D. The cytochrome P450 monooxygenase tenA then catalyzes an oxidative ring expansion of pretenellin A and 14-hydropretellenin A to form the 2-pyridone core, leading to pretenellin B and pyridovericin, respectively. The cytochrome P450 monooxygenase tenB is then required for the selective N-hydroxylation of the 2-pyridone nitrogen of yield tellinin and 15-hydroxytellenin (15-HT), respectively. The UDP-glucosyltransferase GT1 and the methyltransferase MT1, located outside the tenS gene cluster, contribute to the stepwise glycosylation and methylation of 15-HT to obtain the glycoside pyridovericin-N-O-(4-O-methyl-beta-D-glucopyranoside) (PMGP). Additional related compounds such as 1-O-methyl-15-HT, (8Z)-1-O-methyl-15-HT, and O-methyltenellin A are also produced but the enzymes involved in their biosynthesis have still to be determined (PubMed:34903054).</text>
</comment>
<comment type="pathway">
    <text evidence="6 7 8 9">Secondary metabolite biosynthesis.</text>
</comment>
<comment type="induction">
    <text evidence="6">Expression is positively regulated by the cluster-specific transcription factor tenR and is induced during cocultures with the natural competitor fungus Metarhizium robertsii.</text>
</comment>
<comment type="domain">
    <text evidence="13">NRP synthetases are composed of discrete domains (adenylation (A), thiolation (T) or peptidyl carrier protein (PCP) and condensation (C) domains) which when grouped together are referred to as a single module. Each module is responsible for the recognition (via the A domain) and incorporation of a single amino acid into the growing peptide product. Thus, an NRP synthetase is generally composed of one or more modules and can terminate in a thioesterase domain (TE) that releases the newly synthesized peptide from the enzyme. TenS contains also a polyketide synthase module (PKS) consisting of several catalytic domains including a ketoacyl synthase domain (KS), a malonyl-CoA:ACP transacylase domain (MAT), a dehydratase domain (DH), a methyltransferase domain (MT), and a ketoreductase domain (KR). Instead of a thioesterase domain (TE), tenS finishes with a reductase-like domain (RED) for peptide release. TenS has the following architecture: KS-MAT-DH-MT-KR-PCP-C-A-T-RED.</text>
</comment>
<comment type="disruption phenotype">
    <text evidence="6 9">Impairs the production of tenellin-type 2-pyridones and their intermediates.</text>
</comment>
<comment type="similarity">
    <text evidence="12">In the C-terminal section; belongs to the NRP synthetase family.</text>
</comment>
<keyword id="KW-0436">Ligase</keyword>
<keyword id="KW-0489">Methyltransferase</keyword>
<keyword id="KW-0511">Multifunctional enzyme</keyword>
<keyword id="KW-0560">Oxidoreductase</keyword>
<keyword id="KW-0596">Phosphopantetheine</keyword>
<keyword id="KW-0597">Phosphoprotein</keyword>
<keyword id="KW-0677">Repeat</keyword>
<keyword id="KW-0808">Transferase</keyword>
<feature type="chain" id="PRO_0000438443" description="Tenellin synthetase">
    <location>
        <begin position="1"/>
        <end position="4239"/>
    </location>
</feature>
<feature type="domain" description="Ketosynthase family 3 (KS3)" evidence="3 13">
    <location>
        <begin position="15"/>
        <end position="454"/>
    </location>
</feature>
<feature type="domain" description="PKS/mFAS DH" evidence="4">
    <location>
        <begin position="993"/>
        <end position="1313"/>
    </location>
</feature>
<feature type="domain" description="Carrier 1" evidence="2">
    <location>
        <begin position="2502"/>
        <end position="2582"/>
    </location>
</feature>
<feature type="domain" description="Carrier 2" evidence="2">
    <location>
        <begin position="3751"/>
        <end position="3835"/>
    </location>
</feature>
<feature type="region of interest" description="Malonyl-CoA:ACP transacylase (MAT) domain" evidence="1 13">
    <location>
        <begin position="589"/>
        <end position="923"/>
    </location>
</feature>
<feature type="region of interest" description="Dehydratase (DH) domain" evidence="1 13">
    <location>
        <begin position="993"/>
        <end position="1310"/>
    </location>
</feature>
<feature type="region of interest" description="N-terminal hotdog fold" evidence="4">
    <location>
        <begin position="993"/>
        <end position="1135"/>
    </location>
</feature>
<feature type="region of interest" description="C-terminal hotdog fold" evidence="4">
    <location>
        <begin position="1158"/>
        <end position="1313"/>
    </location>
</feature>
<feature type="region of interest" description="Methyltransferase (MT) domain" evidence="1 13">
    <location>
        <begin position="1459"/>
        <end position="1652"/>
    </location>
</feature>
<feature type="region of interest" description="Ketoreductase (KR) domain" evidence="1 13">
    <location>
        <begin position="2209"/>
        <end position="2382"/>
    </location>
</feature>
<feature type="region of interest" description="Disordered" evidence="5">
    <location>
        <begin position="2587"/>
        <end position="2629"/>
    </location>
</feature>
<feature type="region of interest" description="Disordered" evidence="5">
    <location>
        <begin position="2642"/>
        <end position="2712"/>
    </location>
</feature>
<feature type="region of interest" description="Condensation (C) domain" evidence="1 13">
    <location>
        <begin position="2723"/>
        <end position="3169"/>
    </location>
</feature>
<feature type="region of interest" description="Adenylation (A) (KR) domain" evidence="1 13">
    <location>
        <begin position="3203"/>
        <end position="3614"/>
    </location>
</feature>
<feature type="region of interest" description="Disordered" evidence="5">
    <location>
        <begin position="3728"/>
        <end position="3752"/>
    </location>
</feature>
<feature type="region of interest" description="Disordered" evidence="5">
    <location>
        <begin position="3862"/>
        <end position="3892"/>
    </location>
</feature>
<feature type="region of interest" description="Reductase (RED) domain" evidence="1 13">
    <location>
        <begin position="3899"/>
        <end position="4145"/>
    </location>
</feature>
<feature type="compositionally biased region" description="Polar residues" evidence="5">
    <location>
        <begin position="2648"/>
        <end position="2662"/>
    </location>
</feature>
<feature type="compositionally biased region" description="Polar residues" evidence="5">
    <location>
        <begin position="2670"/>
        <end position="2681"/>
    </location>
</feature>
<feature type="compositionally biased region" description="Low complexity" evidence="5">
    <location>
        <begin position="2682"/>
        <end position="2698"/>
    </location>
</feature>
<feature type="compositionally biased region" description="Low complexity" evidence="5">
    <location>
        <begin position="3729"/>
        <end position="3745"/>
    </location>
</feature>
<feature type="compositionally biased region" description="Low complexity" evidence="5">
    <location>
        <begin position="3867"/>
        <end position="3885"/>
    </location>
</feature>
<feature type="active site" description="For beta-ketoacyl synthase activity" evidence="3">
    <location>
        <position position="189"/>
    </location>
</feature>
<feature type="active site" description="For beta-ketoacyl synthase activity" evidence="3">
    <location>
        <position position="326"/>
    </location>
</feature>
<feature type="active site" description="For beta-ketoacyl synthase activity" evidence="3">
    <location>
        <position position="374"/>
    </location>
</feature>
<feature type="active site" description="Proton acceptor; for dehydratase activity" evidence="4">
    <location>
        <position position="1025"/>
    </location>
</feature>
<feature type="active site" description="Proton donor; for dehydratase activity" evidence="4">
    <location>
        <position position="1217"/>
    </location>
</feature>
<feature type="modified residue" description="O-(pantetheine 4'-phosphoryl)serine" evidence="2">
    <location>
        <position position="2542"/>
    </location>
</feature>
<feature type="modified residue" description="O-(pantetheine 4'-phosphoryl)serine" evidence="2">
    <location>
        <position position="3795"/>
    </location>
</feature>
<dbReference type="EC" id="2.3.1.-" evidence="6 7"/>
<dbReference type="EC" id="6.3.2.-" evidence="6 7"/>
<dbReference type="EMBL" id="AM409327">
    <property type="protein sequence ID" value="CAL69597.1"/>
    <property type="molecule type" value="Genomic_DNA"/>
</dbReference>
<dbReference type="SMR" id="A0JJU1"/>
<dbReference type="GO" id="GO:0004312">
    <property type="term" value="F:fatty acid synthase activity"/>
    <property type="evidence" value="ECO:0007669"/>
    <property type="project" value="TreeGrafter"/>
</dbReference>
<dbReference type="GO" id="GO:0016874">
    <property type="term" value="F:ligase activity"/>
    <property type="evidence" value="ECO:0007669"/>
    <property type="project" value="UniProtKB-KW"/>
</dbReference>
<dbReference type="GO" id="GO:0008168">
    <property type="term" value="F:methyltransferase activity"/>
    <property type="evidence" value="ECO:0007669"/>
    <property type="project" value="UniProtKB-KW"/>
</dbReference>
<dbReference type="GO" id="GO:0016491">
    <property type="term" value="F:oxidoreductase activity"/>
    <property type="evidence" value="ECO:0007669"/>
    <property type="project" value="UniProtKB-KW"/>
</dbReference>
<dbReference type="GO" id="GO:0031177">
    <property type="term" value="F:phosphopantetheine binding"/>
    <property type="evidence" value="ECO:0007669"/>
    <property type="project" value="InterPro"/>
</dbReference>
<dbReference type="GO" id="GO:0006633">
    <property type="term" value="P:fatty acid biosynthetic process"/>
    <property type="evidence" value="ECO:0007669"/>
    <property type="project" value="TreeGrafter"/>
</dbReference>
<dbReference type="GO" id="GO:0032259">
    <property type="term" value="P:methylation"/>
    <property type="evidence" value="ECO:0007669"/>
    <property type="project" value="UniProtKB-KW"/>
</dbReference>
<dbReference type="GO" id="GO:0009403">
    <property type="term" value="P:toxin biosynthetic process"/>
    <property type="evidence" value="ECO:0007669"/>
    <property type="project" value="UniProtKB-ARBA"/>
</dbReference>
<dbReference type="CDD" id="cd05930">
    <property type="entry name" value="A_NRPS"/>
    <property type="match status" value="1"/>
</dbReference>
<dbReference type="CDD" id="cd02440">
    <property type="entry name" value="AdoMet_MTases"/>
    <property type="match status" value="1"/>
</dbReference>
<dbReference type="CDD" id="cd19532">
    <property type="entry name" value="C_PKS-NRPS"/>
    <property type="match status" value="1"/>
</dbReference>
<dbReference type="CDD" id="cd00833">
    <property type="entry name" value="PKS"/>
    <property type="match status" value="1"/>
</dbReference>
<dbReference type="Gene3D" id="3.30.300.30">
    <property type="match status" value="1"/>
</dbReference>
<dbReference type="Gene3D" id="3.30.70.3290">
    <property type="match status" value="1"/>
</dbReference>
<dbReference type="Gene3D" id="3.40.47.10">
    <property type="match status" value="1"/>
</dbReference>
<dbReference type="Gene3D" id="1.10.1200.10">
    <property type="entry name" value="ACP-like"/>
    <property type="match status" value="2"/>
</dbReference>
<dbReference type="Gene3D" id="3.30.559.10">
    <property type="entry name" value="Chloramphenicol acetyltransferase-like domain"/>
    <property type="match status" value="1"/>
</dbReference>
<dbReference type="Gene3D" id="3.40.366.10">
    <property type="entry name" value="Malonyl-Coenzyme A Acyl Carrier Protein, domain 2"/>
    <property type="match status" value="1"/>
</dbReference>
<dbReference type="Gene3D" id="3.40.50.12780">
    <property type="entry name" value="N-terminal domain of ligase-like"/>
    <property type="match status" value="1"/>
</dbReference>
<dbReference type="Gene3D" id="3.40.50.720">
    <property type="entry name" value="NAD(P)-binding Rossmann-like Domain"/>
    <property type="match status" value="2"/>
</dbReference>
<dbReference type="Gene3D" id="3.30.559.30">
    <property type="entry name" value="Nonribosomal peptide synthetase, condensation domain"/>
    <property type="match status" value="1"/>
</dbReference>
<dbReference type="Gene3D" id="3.10.129.110">
    <property type="entry name" value="Polyketide synthase dehydratase"/>
    <property type="match status" value="1"/>
</dbReference>
<dbReference type="Gene3D" id="3.40.50.150">
    <property type="entry name" value="Vaccinia Virus protein VP39"/>
    <property type="match status" value="1"/>
</dbReference>
<dbReference type="InterPro" id="IPR010071">
    <property type="entry name" value="AA_adenyl_dom"/>
</dbReference>
<dbReference type="InterPro" id="IPR001227">
    <property type="entry name" value="Ac_transferase_dom_sf"/>
</dbReference>
<dbReference type="InterPro" id="IPR036736">
    <property type="entry name" value="ACP-like_sf"/>
</dbReference>
<dbReference type="InterPro" id="IPR014043">
    <property type="entry name" value="Acyl_transferase_dom"/>
</dbReference>
<dbReference type="InterPro" id="IPR016035">
    <property type="entry name" value="Acyl_Trfase/lysoPLipase"/>
</dbReference>
<dbReference type="InterPro" id="IPR045851">
    <property type="entry name" value="AMP-bd_C_sf"/>
</dbReference>
<dbReference type="InterPro" id="IPR020845">
    <property type="entry name" value="AMP-binding_CS"/>
</dbReference>
<dbReference type="InterPro" id="IPR000873">
    <property type="entry name" value="AMP-dep_synth/lig_dom"/>
</dbReference>
<dbReference type="InterPro" id="IPR042099">
    <property type="entry name" value="ANL_N_sf"/>
</dbReference>
<dbReference type="InterPro" id="IPR023213">
    <property type="entry name" value="CAT-like_dom_sf"/>
</dbReference>
<dbReference type="InterPro" id="IPR001242">
    <property type="entry name" value="Condensatn"/>
</dbReference>
<dbReference type="InterPro" id="IPR013120">
    <property type="entry name" value="Far_NAD-bd"/>
</dbReference>
<dbReference type="InterPro" id="IPR014031">
    <property type="entry name" value="Ketoacyl_synth_C"/>
</dbReference>
<dbReference type="InterPro" id="IPR014030">
    <property type="entry name" value="Ketoacyl_synth_N"/>
</dbReference>
<dbReference type="InterPro" id="IPR016036">
    <property type="entry name" value="Malonyl_transacylase_ACP-bd"/>
</dbReference>
<dbReference type="InterPro" id="IPR013217">
    <property type="entry name" value="Methyltransf_12"/>
</dbReference>
<dbReference type="InterPro" id="IPR036291">
    <property type="entry name" value="NAD(P)-bd_dom_sf"/>
</dbReference>
<dbReference type="InterPro" id="IPR032821">
    <property type="entry name" value="PKS_assoc"/>
</dbReference>
<dbReference type="InterPro" id="IPR020841">
    <property type="entry name" value="PKS_Beta-ketoAc_synthase_dom"/>
</dbReference>
<dbReference type="InterPro" id="IPR042104">
    <property type="entry name" value="PKS_dehydratase_sf"/>
</dbReference>
<dbReference type="InterPro" id="IPR020807">
    <property type="entry name" value="PKS_DH"/>
</dbReference>
<dbReference type="InterPro" id="IPR049551">
    <property type="entry name" value="PKS_DH_C"/>
</dbReference>
<dbReference type="InterPro" id="IPR049552">
    <property type="entry name" value="PKS_DH_N"/>
</dbReference>
<dbReference type="InterPro" id="IPR013968">
    <property type="entry name" value="PKS_KR"/>
</dbReference>
<dbReference type="InterPro" id="IPR049900">
    <property type="entry name" value="PKS_mFAS_DH"/>
</dbReference>
<dbReference type="InterPro" id="IPR050091">
    <property type="entry name" value="PKS_NRPS_Biosynth_Enz"/>
</dbReference>
<dbReference type="InterPro" id="IPR020806">
    <property type="entry name" value="PKS_PP-bd"/>
</dbReference>
<dbReference type="InterPro" id="IPR009081">
    <property type="entry name" value="PP-bd_ACP"/>
</dbReference>
<dbReference type="InterPro" id="IPR006162">
    <property type="entry name" value="Ppantetheine_attach_site"/>
</dbReference>
<dbReference type="InterPro" id="IPR029063">
    <property type="entry name" value="SAM-dependent_MTases_sf"/>
</dbReference>
<dbReference type="InterPro" id="IPR016039">
    <property type="entry name" value="Thiolase-like"/>
</dbReference>
<dbReference type="NCBIfam" id="TIGR01733">
    <property type="entry name" value="AA-adenyl-dom"/>
    <property type="match status" value="1"/>
</dbReference>
<dbReference type="PANTHER" id="PTHR43775">
    <property type="entry name" value="FATTY ACID SYNTHASE"/>
    <property type="match status" value="1"/>
</dbReference>
<dbReference type="PANTHER" id="PTHR43775:SF20">
    <property type="entry name" value="HYBRID PKS-NRPS SYNTHETASE APDA"/>
    <property type="match status" value="1"/>
</dbReference>
<dbReference type="Pfam" id="PF00698">
    <property type="entry name" value="Acyl_transf_1"/>
    <property type="match status" value="1"/>
</dbReference>
<dbReference type="Pfam" id="PF00501">
    <property type="entry name" value="AMP-binding"/>
    <property type="match status" value="1"/>
</dbReference>
<dbReference type="Pfam" id="PF00668">
    <property type="entry name" value="Condensation"/>
    <property type="match status" value="1"/>
</dbReference>
<dbReference type="Pfam" id="PF16197">
    <property type="entry name" value="KAsynt_C_assoc"/>
    <property type="match status" value="1"/>
</dbReference>
<dbReference type="Pfam" id="PF00109">
    <property type="entry name" value="ketoacyl-synt"/>
    <property type="match status" value="1"/>
</dbReference>
<dbReference type="Pfam" id="PF02801">
    <property type="entry name" value="Ketoacyl-synt_C"/>
    <property type="match status" value="1"/>
</dbReference>
<dbReference type="Pfam" id="PF08659">
    <property type="entry name" value="KR"/>
    <property type="match status" value="1"/>
</dbReference>
<dbReference type="Pfam" id="PF08242">
    <property type="entry name" value="Methyltransf_12"/>
    <property type="match status" value="1"/>
</dbReference>
<dbReference type="Pfam" id="PF07993">
    <property type="entry name" value="NAD_binding_4"/>
    <property type="match status" value="1"/>
</dbReference>
<dbReference type="Pfam" id="PF21089">
    <property type="entry name" value="PKS_DH_N"/>
    <property type="match status" value="1"/>
</dbReference>
<dbReference type="Pfam" id="PF00550">
    <property type="entry name" value="PP-binding"/>
    <property type="match status" value="2"/>
</dbReference>
<dbReference type="Pfam" id="PF14765">
    <property type="entry name" value="PS-DH"/>
    <property type="match status" value="1"/>
</dbReference>
<dbReference type="SMART" id="SM00827">
    <property type="entry name" value="PKS_AT"/>
    <property type="match status" value="1"/>
</dbReference>
<dbReference type="SMART" id="SM00826">
    <property type="entry name" value="PKS_DH"/>
    <property type="match status" value="1"/>
</dbReference>
<dbReference type="SMART" id="SM00822">
    <property type="entry name" value="PKS_KR"/>
    <property type="match status" value="1"/>
</dbReference>
<dbReference type="SMART" id="SM00825">
    <property type="entry name" value="PKS_KS"/>
    <property type="match status" value="1"/>
</dbReference>
<dbReference type="SMART" id="SM00823">
    <property type="entry name" value="PKS_PP"/>
    <property type="match status" value="2"/>
</dbReference>
<dbReference type="SUPFAM" id="SSF56801">
    <property type="entry name" value="Acetyl-CoA synthetase-like"/>
    <property type="match status" value="1"/>
</dbReference>
<dbReference type="SUPFAM" id="SSF47336">
    <property type="entry name" value="ACP-like"/>
    <property type="match status" value="2"/>
</dbReference>
<dbReference type="SUPFAM" id="SSF52777">
    <property type="entry name" value="CoA-dependent acyltransferases"/>
    <property type="match status" value="2"/>
</dbReference>
<dbReference type="SUPFAM" id="SSF52151">
    <property type="entry name" value="FabD/lysophospholipase-like"/>
    <property type="match status" value="1"/>
</dbReference>
<dbReference type="SUPFAM" id="SSF51735">
    <property type="entry name" value="NAD(P)-binding Rossmann-fold domains"/>
    <property type="match status" value="2"/>
</dbReference>
<dbReference type="SUPFAM" id="SSF55048">
    <property type="entry name" value="Probable ACP-binding domain of malonyl-CoA ACP transacylase"/>
    <property type="match status" value="1"/>
</dbReference>
<dbReference type="SUPFAM" id="SSF53335">
    <property type="entry name" value="S-adenosyl-L-methionine-dependent methyltransferases"/>
    <property type="match status" value="1"/>
</dbReference>
<dbReference type="SUPFAM" id="SSF53901">
    <property type="entry name" value="Thiolase-like"/>
    <property type="match status" value="1"/>
</dbReference>
<dbReference type="PROSITE" id="PS00455">
    <property type="entry name" value="AMP_BINDING"/>
    <property type="match status" value="1"/>
</dbReference>
<dbReference type="PROSITE" id="PS50075">
    <property type="entry name" value="CARRIER"/>
    <property type="match status" value="2"/>
</dbReference>
<dbReference type="PROSITE" id="PS52004">
    <property type="entry name" value="KS3_2"/>
    <property type="match status" value="1"/>
</dbReference>
<dbReference type="PROSITE" id="PS00012">
    <property type="entry name" value="PHOSPHOPANTETHEINE"/>
    <property type="match status" value="1"/>
</dbReference>
<dbReference type="PROSITE" id="PS52019">
    <property type="entry name" value="PKS_MFAS_DH"/>
    <property type="match status" value="1"/>
</dbReference>
<gene>
    <name evidence="10" type="primary">tenS</name>
</gene>
<sequence>MSPMKQNESESHSVSEPIAIIGSAYRFPGGCNTPSKLWDLLRQPRDILKEIDPERLNLRRYYHPDGETHGSTDVANKAYTLEEDISRFDASFFGISPLEAASMDPQQRTLLEVVYESTETAGIPLDKLRGSLTSVHVGVMTTDWAQMQRRDPETMPQYTATGIASSIISNRISYIFDLKGASETIDTACSSSLVALHNAARALQSGDCEKAIVAGVNLILDPDPFIYESKLHMLSPDARSRMWDAAANGYARGEGAAAVVLKTLGHALRDGDRIEGVIRSTFVNSDGLSSGLTMPSSAAQTALIRQTYRKAGLDPVRDRPQFFECHGTGTKAGDPVEARAISDAFLPPSHRTNGAATTVDAPLYVGSIKTVVGHLEGCAGLAGLVKVLLSLKHGIIPPNLWFDKLNPEIARYYGPLQIPTKAIPWPKLAPGTPLRASVNSFGFGGTNAHAIIERYDASQSYCSQWRRNMTEEKTIARTQNNESIEIPVPLVLTAKTGRALWRTVDAYAQHLRQHPKLRVTNLSQFMHSRRSTHRVRASFSGASREELVENMAKFVQAHAADAKSPASQNRIGYSPLHIDPKEAPGILGVFTGQGAQWPAMGRDMMHQSPLFRKTIADCESVLQALPAKDAPVWSLSEELKKDASTSRLGEAEISQPLCTAVQLALVNVLLASGVHFDAVVGHSSGEIAATYASGIINLEAAMQIAYYRGLYAKLARGETDAAGGMMAAGLSMNDAVKLCRLPEFEGRIHVAASNAPQSVTLSGDKEAIKAAKAKLDADGVFARELKVDTAYHSHHMLPCAEPYLKALLACDIQVSAPTTTPGRKCMWSSSVRGDAELLRHDRNLDSLKGPYWVANMVQTVLFSRAVQSTIWHGGPFDLAVEVGPHPALKGPTEQTLKAVYGSAPLYTGVLSRGANDAVAFSTAIGNIWSHLGPAFVDITGYQSIFSSTCEGHGGGSAAPFISDLPLYPWDHDEEYWRESRISRRHRTGKDESHELLGRRTPDDNEREIRWRNLLKVSELPWTQGHRVLGEVLLPGAAYISMAIEAGRRLALDQGREARLLEVSDVDILRPVVVADNKEGTETLFTVRLLDEYASTGKKSDELITASFSFYIYNSPASTSIVHTCEGRIAVQLGAKLGSEAGANSMPQLPHREPSISNLQQLDCEKLYSVFETIGLEYSGAFRRIVSSSRCLGHATATASWPTTDLNDCYLIHPAILDVAFQTIFVARAHPDSGQLSSALLPSRIERVRVVPSLAMGSKLQNNENFNAAIDSWALNQTASSLTGNINVYDAESGRALIQVEGFEVRAVGEPDASKDRLLFYETVWGRDISIMGLSDPIRDETSDAMVHNLSEAIERVSLFYVRQLMGELSTADRRQANWYHTRMLAAFDYHLAKVHEETHLHLRPEWLADDWAVIQTIDEAYPDAVELQMLHAVGQNVADVIRGKKHLLEVLRVDNLLDRLYTEDKGMHMANLFLANALEEITFKFPRCKILEIGAGTGATTWAALSAIGEAFDTYTYTDLSVGFFENAVERFSAFRHRMVFRALDIEKDPASQSFDLNSYDIIIATNVLHATRNLGVTLGNVRALLKPGGYLLLNEKTGPESLRATFNFGGLEGWWLAEEKERQLSPLMSPDGWDAQLQKASFSGVDHIVHDVQEDQQDKQQNSMIMSQAVDDTFYARLSPLSEMANLLPMNEPLLIIGGQTTATLKMIKEIQKLLPRQWRHKVRLIASVDHVEAEGLPAHSDVICLQELDRGLFTTAMTSKCLDALKTLFINTRNLLWVTNAQNSSSMTPRASMFRGITRVLDGEVPHIRTQVLGIEPRETPSATARTLLEAFLRLRSDDGRHAGNVDEDGADGSSQQVLWLHEPEAELLSNGTMMVPRVKARKSLNDTYLASTRAISTTVDARCVSVQAVAGPAKMLLRPVEDFAGEHAISNQTSDSKVHIQVESTLHIPEALDGTCLYLVCGWTRTAETSVPVIALSANNASMVAVESKAVAMIDEVDVKPETLLRVFQHMAMQALDSAVKRHGQGQSTALIYGADEELAKLTSERFAVRESKVYFASSRTFAPGDWLKVQPLLSKFALSQMIPADVEVFIDCLGDTESFDACRTLQSCLSTTRTVQHRLDACLLSQMSRCSPDALVDAYSYAKTQSNAEFSWNGYVKTFTAAELAGKLSHSLIHSVYMTNWQKKDSILVTVPPLQTRGLFKSDRTYLMVGAAGGLGTSICRWMVRNGARHVVVTSRNPKADPEMLNEAERYGAAVQVVPMDACSKDSVQTVVDMIRATMPPIAGVCNAAMVLRDKLFLDMNVDHMKDVLGPKMQGTEHLDSIFAQEPLDFFVLLSSSAAILNNTGQSNYHCANLYMDSLVTNRRSRGLAASIIHVGHVCDTGYVARLVDDTKVQMSLGTTRVMSVSETDVHHAFAEAVRGGQPDSRSGSHNIIMGIEPPTKPLDLTKRKPVWISDPRLGPCLPFSTLENQMMASEQAAAASAVDSLAQQVSEATTDEEAAVAALKGFATKLEGILLLPLGSIGEDSAGRPVTDLGIDSLVAVEIRTWFLKQLRVDVPVMKILGGSTVGQLSALAAKLARQDAKKRAQLEEPSGNQPVALPSPPPKDKAGGLNKNGKSPKLPEIAQVDTVVERMEPLVLEASDRGGSSTANLTTSSSVSELDDSLHESTLQSSDNNGESTPSKSSNCNSDSGSDNQAPKEIPSNGFFTQPAATARPNVLREAPMSPAQSRIWFLSKHIAEPDAYNMVFHYRVRGPLSMVRLRHALQTVTNHHECLCMCFYASADNGQPMQGLLASSAFQMTHVPGGEEQDVQRELRKLKTRVWSVESGQTLELVVLGPRPGTAAAAEEEEEEFSLLFGYHHIVMDAISFYIFLADLDKAYRMLPLDKASAGSHLDLAAHQRQQERAGAWEESLEFWRAEFETIPEMLPSLSVALPTLHRGAVGTHRVLRELAHEQGGDAAIKKMCKHLRVSPFNLHIAVLQVVIARLASIEDVCVGIVDANRSDSRASRMVGCFVNMLPVRSRILPTATLADVARAASSKALAAFAHGQVPLDSILDKVKAPRPAGSTPLFQVALNYRPAAAIASKQALGGECEMELLADDFKDAENPFEISVLVSEMSGGRIAVEVVCQKSRYTMQATEALLDAYLNVLAGFLSDSAQSVGDCVVHDQSKVEHALDLGRGAQKSFGWPRTLSERVMSICQQHSTKSAIKDGRNELSYAQLASRVNRTASAILGTGCSVGSRIAVLCNPSIDAIVAMLAILHIGGVYVPLDTSLPEARHQSLASNCTPSLIISHAATRERAHKLSAAISAPGHEPARELTLDDLSPPEETGYMAPLNAEPNAPAILLYTSGSTGTPKGVLLTQANFGNHIALKTDILGLQRGECVLQQSSLGFDMSLVQVFCALANGGCLVIVRQDVRRDPVELTTLMTQHKVSLTIATPSEYLAWLQYGSDALAQATSWKNLCMGGEPIPPLLKDELRRRLERKDLVVTNCYGPTETTAAISFQSVALDSEHGHELPGESELAQYAVGKALPNYSIRIRDSAGGAWLPVNHTGEIVIGGAGVALGYLDMPEETRARFLQTPGEEDGMMLYRTGDKGRLLSDGTLLCFGRITGDYQVKLRGLRIELGEVEAALLQASHGLIHTAVVSRRGDVLVAHCARSHESSRETTGGGEQQDATAILRRVSELLPQYSVPAAIALLPSLPTNANGKLDRKAIAALPLSPQDEAAAATSPSNNNINNNTPSGGGGEKMTVRQGELRLLWERVLPRDAATTTTNSVRITPESDFFLRGGNSLLLMKLQAAIRESMGVRVSTKALYQASTLSGMARCVAEQRSDDDEAEEDIDWAAEVAVPPSMLAQIEKLQHSSASSSSSSSSSSSAGSSSTQRPRKTSGLEILLTGATGFLGGQLLERLVQSPRVSTVHCVAVPVDEQSLLEPFLQQQADGTRRKVRCYIGNLAAPALGLTAADQTALSQTADVIVHAGSMGHCLNTYATLAAPNFASTRHLCSLALSRSPPIPLAFASSNRVALLTGSTAPPPASAAAFPPPPGAQGFTASKWASEAFLEKLAASIMTSKTKSTTTTTTTTVPWRVSIHRPCALISDRAPNSDALNAILRYSTSMRCVPSLPEHRAEGYLDFGQVDKVVEEMVGDILGLADERQQEGPAVVYRHHSGGVKVPIHEFREHMESVYGGRFESVELGQWIVRAVDAGMDPLISAYLETFLEGDASMVFPYMGEQAV</sequence>